<proteinExistence type="evidence at protein level"/>
<feature type="chain" id="PRO_0000439251" description="Fructose import permease protein FrcC">
    <location>
        <begin position="1"/>
        <end position="360"/>
    </location>
</feature>
<feature type="transmembrane region" description="Helical" evidence="1">
    <location>
        <begin position="48"/>
        <end position="68"/>
    </location>
</feature>
<feature type="transmembrane region" description="Helical" evidence="1">
    <location>
        <begin position="84"/>
        <end position="106"/>
    </location>
</feature>
<feature type="transmembrane region" description="Helical" evidence="1">
    <location>
        <begin position="125"/>
        <end position="145"/>
    </location>
</feature>
<feature type="transmembrane region" description="Helical" evidence="1">
    <location>
        <begin position="155"/>
        <end position="175"/>
    </location>
</feature>
<feature type="transmembrane region" description="Helical" evidence="1">
    <location>
        <begin position="205"/>
        <end position="225"/>
    </location>
</feature>
<feature type="transmembrane region" description="Helical" evidence="1">
    <location>
        <begin position="254"/>
        <end position="274"/>
    </location>
</feature>
<feature type="transmembrane region" description="Helical" evidence="1">
    <location>
        <begin position="284"/>
        <end position="304"/>
    </location>
</feature>
<feature type="transmembrane region" description="Helical" evidence="1">
    <location>
        <begin position="310"/>
        <end position="330"/>
    </location>
</feature>
<feature type="transmembrane region" description="Helical" evidence="1">
    <location>
        <begin position="335"/>
        <end position="355"/>
    </location>
</feature>
<reference key="1">
    <citation type="journal article" date="2001" name="J. Bacteriol.">
        <title>Fructose uptake in Sinorhizobium meliloti is mediated by a high-affinity ATP-binding cassette transport system.</title>
        <authorList>
            <person name="Lambert A."/>
            <person name="Osteras M."/>
            <person name="Mandon K."/>
            <person name="Poggi M.C."/>
            <person name="Le Rudulier D."/>
        </authorList>
    </citation>
    <scope>NUCLEOTIDE SEQUENCE [GENOMIC DNA]</scope>
    <scope>FUNCTION</scope>
    <scope>SUBUNIT</scope>
    <scope>INDUCTION</scope>
    <scope>DISRUPTION PHENOTYPE</scope>
    <source>
        <strain>SU47 / Rm5000</strain>
    </source>
</reference>
<evidence type="ECO:0000255" key="1"/>
<evidence type="ECO:0000269" key="2">
    <source>
    </source>
</evidence>
<evidence type="ECO:0000303" key="3">
    <source>
    </source>
</evidence>
<evidence type="ECO:0000305" key="4"/>
<evidence type="ECO:0000305" key="5">
    <source>
    </source>
</evidence>
<keyword id="KW-0997">Cell inner membrane</keyword>
<keyword id="KW-1003">Cell membrane</keyword>
<keyword id="KW-0472">Membrane</keyword>
<keyword id="KW-0762">Sugar transport</keyword>
<keyword id="KW-0812">Transmembrane</keyword>
<keyword id="KW-1133">Transmembrane helix</keyword>
<keyword id="KW-0813">Transport</keyword>
<gene>
    <name evidence="3" type="primary">frcC</name>
</gene>
<accession>Q9F9B1</accession>
<organism>
    <name type="scientific">Rhizobium meliloti</name>
    <name type="common">Ensifer meliloti</name>
    <name type="synonym">Sinorhizobium meliloti</name>
    <dbReference type="NCBI Taxonomy" id="382"/>
    <lineage>
        <taxon>Bacteria</taxon>
        <taxon>Pseudomonadati</taxon>
        <taxon>Pseudomonadota</taxon>
        <taxon>Alphaproteobacteria</taxon>
        <taxon>Hyphomicrobiales</taxon>
        <taxon>Rhizobiaceae</taxon>
        <taxon>Sinorhizobium/Ensifer group</taxon>
        <taxon>Sinorhizobium</taxon>
    </lineage>
</organism>
<dbReference type="EMBL" id="AF196574">
    <property type="protein sequence ID" value="AAG28499.1"/>
    <property type="molecule type" value="Genomic_DNA"/>
</dbReference>
<dbReference type="RefSeq" id="WP_003531509.1">
    <property type="nucleotide sequence ID" value="NZ_WISY01000026.1"/>
</dbReference>
<dbReference type="STRING" id="382.DU99_02550"/>
<dbReference type="TCDB" id="3.A.1.2.7">
    <property type="family name" value="the atp-binding cassette (abc) superfamily"/>
</dbReference>
<dbReference type="PATRIC" id="fig|382.52.peg.515"/>
<dbReference type="OMA" id="HTAWGRH"/>
<dbReference type="GO" id="GO:0005886">
    <property type="term" value="C:plasma membrane"/>
    <property type="evidence" value="ECO:0007669"/>
    <property type="project" value="UniProtKB-SubCell"/>
</dbReference>
<dbReference type="GO" id="GO:0022857">
    <property type="term" value="F:transmembrane transporter activity"/>
    <property type="evidence" value="ECO:0007669"/>
    <property type="project" value="InterPro"/>
</dbReference>
<dbReference type="CDD" id="cd06579">
    <property type="entry name" value="TM_PBP1_transp_AraH_like"/>
    <property type="match status" value="1"/>
</dbReference>
<dbReference type="InterPro" id="IPR001851">
    <property type="entry name" value="ABC_transp_permease"/>
</dbReference>
<dbReference type="PANTHER" id="PTHR32196">
    <property type="entry name" value="ABC TRANSPORTER PERMEASE PROTEIN YPHD-RELATED-RELATED"/>
    <property type="match status" value="1"/>
</dbReference>
<dbReference type="PANTHER" id="PTHR32196:SF72">
    <property type="entry name" value="RIBOSE IMPORT PERMEASE PROTEIN RBSC"/>
    <property type="match status" value="1"/>
</dbReference>
<dbReference type="Pfam" id="PF02653">
    <property type="entry name" value="BPD_transp_2"/>
    <property type="match status" value="1"/>
</dbReference>
<name>FRCC_RHIML</name>
<comment type="function">
    <text evidence="2 4">Part of the high-affinity ABC transporter complex FrcBCA involved in fructose uptake. Is also a high-affinity transporter for ribose and mannose (PubMed:11466273). Responsible for the translocation of the substrate across the membrane (Probable).</text>
</comment>
<comment type="subunit">
    <text evidence="5">The complex is composed of two ATP-binding proteins (FrcA), two transmembrane proteins (FrcC) and a solute-binding protein (FrcB).</text>
</comment>
<comment type="subcellular location">
    <subcellularLocation>
        <location evidence="4">Cell inner membrane</location>
        <topology evidence="1">Multi-pass membrane protein</topology>
    </subcellularLocation>
</comment>
<comment type="induction">
    <text evidence="2">Induced by fructose.</text>
</comment>
<comment type="disruption phenotype">
    <text evidence="2">Disruption mutant is unable to grow on fructose as sole carbon source, but can still grow with ribose and mannose as sole carbon source.</text>
</comment>
<comment type="similarity">
    <text evidence="4">Belongs to the binding-protein-dependent transport system permease family.</text>
</comment>
<protein>
    <recommendedName>
        <fullName evidence="4">Fructose import permease protein FrcC</fullName>
    </recommendedName>
</protein>
<sequence length="360" mass="38176">MGETNTAAQPSQEFEKVLADSSTDVASFDAHDKTLLQKLQHFLHSSPAAVPLIVLVLSLIAFGVILGGKFFSAFTMTLILQQVAIVGIVGAAQTLVILTAGIDLSVGAIMVLSSVIMGQFTFRYGFPPALSVICGLGVGALCGYINGTLVARMKLPPFIVTLGMWQIVLASNFLYSANETIRAQDISANASILQFFGQNFRIGNAVFTYGVVVMVLLVCLLWYVLNRTAWGRYVYAVGDDPEAAKLAGVNVTRMLISIYTLSGLICALAGWALIGRIGSVSPTAGQFANIESITAVVIGGISLFGGRGSIMGMLFGALIVGVFSLGLRLMGTDPQWTYLLIGLLIIIAVAIDQWIRKVAA</sequence>